<organism>
    <name type="scientific">Hepatitis B virus genotype B2 (isolate Indonesia/pIDW420/1988)</name>
    <name type="common">HBV-B</name>
    <dbReference type="NCBI Taxonomy" id="10412"/>
    <lineage>
        <taxon>Viruses</taxon>
        <taxon>Riboviria</taxon>
        <taxon>Pararnavirae</taxon>
        <taxon>Artverviricota</taxon>
        <taxon>Revtraviricetes</taxon>
        <taxon>Blubervirales</taxon>
        <taxon>Hepadnaviridae</taxon>
        <taxon>Orthohepadnavirus</taxon>
        <taxon>Hepatitis B virus</taxon>
    </lineage>
</organism>
<reference key="1">
    <citation type="journal article" date="1988" name="J. Gen. Virol.">
        <title>Typing hepatitis B virus by homology in nucleotide sequence: comparison of surface antigen subtypes.</title>
        <authorList>
            <person name="Okamoto H."/>
            <person name="Tsuda F."/>
            <person name="Sakugawa H."/>
            <person name="Sastrosoewignjo R.I."/>
            <person name="Imai M."/>
            <person name="Miyakawa Y."/>
            <person name="Mayumi M."/>
        </authorList>
    </citation>
    <scope>NUCLEOTIDE SEQUENCE [GENOMIC DNA]</scope>
</reference>
<protein>
    <recommendedName>
        <fullName evidence="1">Capsid protein</fullName>
    </recommendedName>
    <alternativeName>
        <fullName evidence="1">Core antigen</fullName>
    </alternativeName>
    <alternativeName>
        <fullName evidence="1">Core protein</fullName>
    </alternativeName>
    <alternativeName>
        <fullName evidence="1">HBcAg</fullName>
    </alternativeName>
    <alternativeName>
        <fullName evidence="1">p21.5</fullName>
    </alternativeName>
</protein>
<comment type="function">
    <text evidence="1">Self assembles to form an icosahedral capsid. Most capsids appear to be large particles with an icosahedral symmetry of T=4 and consist of 240 copies of capsid protein, though a fraction forms smaller T=3 particles consisting of 180 capsid proteins. Entering capsids are transported along microtubules to the nucleus. Phosphorylation of the capsid is thought to induce exposure of nuclear localization signal in the C-terminal portion of the capsid protein that allows binding to the nuclear pore complex via the importin (karyopherin-) alpha and beta. Capsids are imported in intact form through the nuclear pore into the nuclear basket, where it probably binds NUP153. Only capsids that contain the mature viral genome can release the viral DNA and capsid protein into the nucleoplasm. Immature capsids get stuck in the basket. Capsids encapsulate the pre-genomic RNA and the P protein. Pre-genomic RNA is reverse-transcribed into DNA while the capsid is still in the cytoplasm. The capsid can then either be directed to the nucleus, providing more genomes for transcription, or bud through the endoplasmic reticulum to provide new virions.</text>
</comment>
<comment type="subunit">
    <text evidence="1">Homodimerizes, then multimerizes. Interacts with cytosol exposed regions of viral L glycoprotein present in the reticulum-to-Golgi compartment. Interacts with human FLNB. Phosphorylated form interacts with host importin alpha; this interaction depends on the exposure of the NLS, which itself depends upon genome maturation and/or phosphorylation of the capsid protein. Interacts with host NUP153.</text>
</comment>
<comment type="subcellular location">
    <subcellularLocation>
        <location evidence="1">Virion</location>
    </subcellularLocation>
    <subcellularLocation>
        <location evidence="1">Host cytoplasm</location>
    </subcellularLocation>
</comment>
<comment type="alternative products">
    <event type="alternative initiation"/>
    <isoform>
        <id>P69707-1</id>
        <name>Capsid protein</name>
        <sequence type="displayed"/>
    </isoform>
    <isoform>
        <id>P0C6G7-1</id>
        <name>External core antigen</name>
        <sequence type="external"/>
    </isoform>
</comment>
<comment type="PTM">
    <text evidence="1">Phosphorylated by host SRPK1, SRPK2, and maybe protein kinase C or GAPDH. Phosphorylation is critical for pregenomic RNA packaging. Protein kinase C phosphorylation is stimulated by HBx protein and may play a role in transport of the viral genome to the nucleus at the late step during the viral replication cycle.</text>
</comment>
<comment type="similarity">
    <text evidence="1">Belongs to the orthohepadnavirus core antigen family.</text>
</comment>
<evidence type="ECO:0000255" key="1">
    <source>
        <dbReference type="HAMAP-Rule" id="MF_04076"/>
    </source>
</evidence>
<evidence type="ECO:0000256" key="2">
    <source>
        <dbReference type="SAM" id="MobiDB-lite"/>
    </source>
</evidence>
<proteinExistence type="inferred from homology"/>
<accession>P69707</accession>
<accession>P03150</accession>
<accession>P03151</accession>
<feature type="chain" id="PRO_0000222311" description="Capsid protein">
    <location>
        <begin position="1"/>
        <end position="183"/>
    </location>
</feature>
<feature type="repeat" description="1; half-length">
    <location>
        <begin position="155"/>
        <end position="161"/>
    </location>
</feature>
<feature type="repeat" description="2">
    <location>
        <begin position="162"/>
        <end position="169"/>
    </location>
</feature>
<feature type="repeat" description="3">
    <location>
        <begin position="170"/>
        <end position="177"/>
    </location>
</feature>
<feature type="region of interest" description="Disordered" evidence="2">
    <location>
        <begin position="136"/>
        <end position="183"/>
    </location>
</feature>
<feature type="region of interest" description="3 X 8 AA repeats of S-P-R-R-R-[PR]-S-Q">
    <location>
        <begin position="155"/>
        <end position="177"/>
    </location>
</feature>
<feature type="region of interest" description="RNA binding" evidence="1">
    <location>
        <begin position="177"/>
        <end position="183"/>
    </location>
</feature>
<feature type="short sequence motif" description="Bipartite nuclear localization signal" evidence="1">
    <location>
        <begin position="158"/>
        <end position="175"/>
    </location>
</feature>
<feature type="compositionally biased region" description="Basic residues" evidence="2">
    <location>
        <begin position="149"/>
        <end position="176"/>
    </location>
</feature>
<feature type="modified residue" description="Phosphoserine; by host" evidence="1">
    <location>
        <position position="155"/>
    </location>
</feature>
<feature type="modified residue" description="Phosphoserine; by host" evidence="1">
    <location>
        <position position="162"/>
    </location>
</feature>
<feature type="modified residue" description="Phosphoserine; by host" evidence="1">
    <location>
        <position position="170"/>
    </location>
</feature>
<organismHost>
    <name type="scientific">Homo sapiens</name>
    <name type="common">Human</name>
    <dbReference type="NCBI Taxonomy" id="9606"/>
</organismHost>
<organismHost>
    <name type="scientific">Pan troglodytes</name>
    <name type="common">Chimpanzee</name>
    <dbReference type="NCBI Taxonomy" id="9598"/>
</organismHost>
<gene>
    <name evidence="1" type="primary">C</name>
</gene>
<name>CAPSD_HBVB2</name>
<sequence length="183" mass="21095">MDIDPYKEFGASVELLSFLPSDFFPSIRDLLDTASALYREALESPEHCSPHHTALRQAILCWGELMNLATWVGSNLEDPASRELVVSYVNVNMGLKIRQLLWFHISCLTFGRETVLEYLVSFGVWIRTPPAYRPPNAPILSTLPETTVVRRRGRSPRRRTPSPRRRRSQSPRRRRSQSRESQC</sequence>
<keyword id="KW-0024">Alternative initiation</keyword>
<keyword id="KW-0167">Capsid protein</keyword>
<keyword id="KW-1176">Cytoplasmic inwards viral transport</keyword>
<keyword id="KW-0238">DNA-binding</keyword>
<keyword id="KW-1035">Host cytoplasm</keyword>
<keyword id="KW-0945">Host-virus interaction</keyword>
<keyword id="KW-1177">Microtubular inwards viral transport</keyword>
<keyword id="KW-0597">Phosphoprotein</keyword>
<keyword id="KW-0677">Repeat</keyword>
<keyword id="KW-0694">RNA-binding</keyword>
<keyword id="KW-1144">T=4 icosahedral capsid protein</keyword>
<keyword id="KW-1163">Viral penetration into host nucleus</keyword>
<keyword id="KW-0946">Virion</keyword>
<keyword id="KW-1160">Virus entry into host cell</keyword>
<dbReference type="EMBL" id="D00331">
    <property type="status" value="NOT_ANNOTATED_CDS"/>
    <property type="molecule type" value="Genomic_DNA"/>
</dbReference>
<dbReference type="SMR" id="P69707"/>
<dbReference type="Proteomes" id="UP000007914">
    <property type="component" value="Genome"/>
</dbReference>
<dbReference type="GO" id="GO:0043657">
    <property type="term" value="C:host cell"/>
    <property type="evidence" value="ECO:0007669"/>
    <property type="project" value="GOC"/>
</dbReference>
<dbReference type="GO" id="GO:0030430">
    <property type="term" value="C:host cell cytoplasm"/>
    <property type="evidence" value="ECO:0007669"/>
    <property type="project" value="UniProtKB-SubCell"/>
</dbReference>
<dbReference type="GO" id="GO:0039619">
    <property type="term" value="C:T=4 icosahedral viral capsid"/>
    <property type="evidence" value="ECO:0007669"/>
    <property type="project" value="UniProtKB-UniRule"/>
</dbReference>
<dbReference type="GO" id="GO:0003677">
    <property type="term" value="F:DNA binding"/>
    <property type="evidence" value="ECO:0007669"/>
    <property type="project" value="UniProtKB-UniRule"/>
</dbReference>
<dbReference type="GO" id="GO:0003723">
    <property type="term" value="F:RNA binding"/>
    <property type="evidence" value="ECO:0007669"/>
    <property type="project" value="UniProtKB-UniRule"/>
</dbReference>
<dbReference type="GO" id="GO:0005198">
    <property type="term" value="F:structural molecule activity"/>
    <property type="evidence" value="ECO:0007669"/>
    <property type="project" value="UniProtKB-UniRule"/>
</dbReference>
<dbReference type="GO" id="GO:0075521">
    <property type="term" value="P:microtubule-dependent intracellular transport of viral material towards nucleus"/>
    <property type="evidence" value="ECO:0007669"/>
    <property type="project" value="UniProtKB-UniRule"/>
</dbReference>
<dbReference type="GO" id="GO:0046718">
    <property type="term" value="P:symbiont entry into host cell"/>
    <property type="evidence" value="ECO:0007669"/>
    <property type="project" value="UniProtKB-UniRule"/>
</dbReference>
<dbReference type="GO" id="GO:0075732">
    <property type="term" value="P:viral penetration into host nucleus"/>
    <property type="evidence" value="ECO:0007669"/>
    <property type="project" value="UniProtKB-UniRule"/>
</dbReference>
<dbReference type="FunFam" id="1.10.4090.10:FF:000001">
    <property type="entry name" value="Capsid protein"/>
    <property type="match status" value="1"/>
</dbReference>
<dbReference type="Gene3D" id="1.10.4090.10">
    <property type="entry name" value="Viral capsid, core domain supefamily, Hepatitis B virus"/>
    <property type="match status" value="1"/>
</dbReference>
<dbReference type="HAMAP" id="MF_04076">
    <property type="entry name" value="HBV_HBEAG"/>
    <property type="match status" value="1"/>
</dbReference>
<dbReference type="InterPro" id="IPR002006">
    <property type="entry name" value="Hepatitis_core"/>
</dbReference>
<dbReference type="InterPro" id="IPR036459">
    <property type="entry name" value="Viral_capsid_core_dom_sf_HBV"/>
</dbReference>
<dbReference type="Pfam" id="PF00906">
    <property type="entry name" value="Hepatitis_core"/>
    <property type="match status" value="3"/>
</dbReference>
<dbReference type="SUPFAM" id="SSF47852">
    <property type="entry name" value="Hepatitis B viral capsid (hbcag)"/>
    <property type="match status" value="1"/>
</dbReference>